<proteinExistence type="inferred from homology"/>
<gene>
    <name evidence="1" type="primary">tyrS</name>
    <name type="ordered locus">ECH74115_2349</name>
</gene>
<accession>B5Z471</accession>
<keyword id="KW-0007">Acetylation</keyword>
<keyword id="KW-0030">Aminoacyl-tRNA synthetase</keyword>
<keyword id="KW-0067">ATP-binding</keyword>
<keyword id="KW-0963">Cytoplasm</keyword>
<keyword id="KW-0436">Ligase</keyword>
<keyword id="KW-0547">Nucleotide-binding</keyword>
<keyword id="KW-0648">Protein biosynthesis</keyword>
<keyword id="KW-0694">RNA-binding</keyword>
<dbReference type="EC" id="6.1.1.1" evidence="1"/>
<dbReference type="EMBL" id="CP001164">
    <property type="protein sequence ID" value="ACI37789.1"/>
    <property type="molecule type" value="Genomic_DNA"/>
</dbReference>
<dbReference type="RefSeq" id="WP_001295400.1">
    <property type="nucleotide sequence ID" value="NC_011353.1"/>
</dbReference>
<dbReference type="SMR" id="B5Z471"/>
<dbReference type="GeneID" id="93775791"/>
<dbReference type="KEGG" id="ecf:ECH74115_2349"/>
<dbReference type="HOGENOM" id="CLU_024003_0_3_6"/>
<dbReference type="GO" id="GO:0005829">
    <property type="term" value="C:cytosol"/>
    <property type="evidence" value="ECO:0007669"/>
    <property type="project" value="TreeGrafter"/>
</dbReference>
<dbReference type="GO" id="GO:0005524">
    <property type="term" value="F:ATP binding"/>
    <property type="evidence" value="ECO:0007669"/>
    <property type="project" value="UniProtKB-UniRule"/>
</dbReference>
<dbReference type="GO" id="GO:0003723">
    <property type="term" value="F:RNA binding"/>
    <property type="evidence" value="ECO:0007669"/>
    <property type="project" value="UniProtKB-KW"/>
</dbReference>
<dbReference type="GO" id="GO:0004831">
    <property type="term" value="F:tyrosine-tRNA ligase activity"/>
    <property type="evidence" value="ECO:0007669"/>
    <property type="project" value="UniProtKB-UniRule"/>
</dbReference>
<dbReference type="GO" id="GO:0006437">
    <property type="term" value="P:tyrosyl-tRNA aminoacylation"/>
    <property type="evidence" value="ECO:0007669"/>
    <property type="project" value="UniProtKB-UniRule"/>
</dbReference>
<dbReference type="CDD" id="cd00165">
    <property type="entry name" value="S4"/>
    <property type="match status" value="1"/>
</dbReference>
<dbReference type="CDD" id="cd00805">
    <property type="entry name" value="TyrRS_core"/>
    <property type="match status" value="1"/>
</dbReference>
<dbReference type="FunFam" id="1.10.240.10:FF:000001">
    <property type="entry name" value="Tyrosine--tRNA ligase"/>
    <property type="match status" value="1"/>
</dbReference>
<dbReference type="FunFam" id="3.10.290.10:FF:000007">
    <property type="entry name" value="Tyrosine--tRNA ligase"/>
    <property type="match status" value="1"/>
</dbReference>
<dbReference type="FunFam" id="3.40.50.620:FF:000008">
    <property type="entry name" value="Tyrosine--tRNA ligase"/>
    <property type="match status" value="1"/>
</dbReference>
<dbReference type="Gene3D" id="3.40.50.620">
    <property type="entry name" value="HUPs"/>
    <property type="match status" value="1"/>
</dbReference>
<dbReference type="Gene3D" id="3.10.290.10">
    <property type="entry name" value="RNA-binding S4 domain"/>
    <property type="match status" value="1"/>
</dbReference>
<dbReference type="Gene3D" id="1.10.240.10">
    <property type="entry name" value="Tyrosyl-Transfer RNA Synthetase"/>
    <property type="match status" value="1"/>
</dbReference>
<dbReference type="HAMAP" id="MF_02006">
    <property type="entry name" value="Tyr_tRNA_synth_type1"/>
    <property type="match status" value="1"/>
</dbReference>
<dbReference type="InterPro" id="IPR001412">
    <property type="entry name" value="aa-tRNA-synth_I_CS"/>
</dbReference>
<dbReference type="InterPro" id="IPR002305">
    <property type="entry name" value="aa-tRNA-synth_Ic"/>
</dbReference>
<dbReference type="InterPro" id="IPR014729">
    <property type="entry name" value="Rossmann-like_a/b/a_fold"/>
</dbReference>
<dbReference type="InterPro" id="IPR002942">
    <property type="entry name" value="S4_RNA-bd"/>
</dbReference>
<dbReference type="InterPro" id="IPR036986">
    <property type="entry name" value="S4_RNA-bd_sf"/>
</dbReference>
<dbReference type="InterPro" id="IPR054608">
    <property type="entry name" value="SYY-like_C"/>
</dbReference>
<dbReference type="InterPro" id="IPR002307">
    <property type="entry name" value="Tyr-tRNA-ligase"/>
</dbReference>
<dbReference type="InterPro" id="IPR024088">
    <property type="entry name" value="Tyr-tRNA-ligase_bac-type"/>
</dbReference>
<dbReference type="InterPro" id="IPR024107">
    <property type="entry name" value="Tyr-tRNA-ligase_bac_1"/>
</dbReference>
<dbReference type="NCBIfam" id="TIGR00234">
    <property type="entry name" value="tyrS"/>
    <property type="match status" value="1"/>
</dbReference>
<dbReference type="PANTHER" id="PTHR11766:SF0">
    <property type="entry name" value="TYROSINE--TRNA LIGASE, MITOCHONDRIAL"/>
    <property type="match status" value="1"/>
</dbReference>
<dbReference type="PANTHER" id="PTHR11766">
    <property type="entry name" value="TYROSYL-TRNA SYNTHETASE"/>
    <property type="match status" value="1"/>
</dbReference>
<dbReference type="Pfam" id="PF22421">
    <property type="entry name" value="SYY_C-terminal"/>
    <property type="match status" value="1"/>
</dbReference>
<dbReference type="Pfam" id="PF00579">
    <property type="entry name" value="tRNA-synt_1b"/>
    <property type="match status" value="1"/>
</dbReference>
<dbReference type="PRINTS" id="PR01040">
    <property type="entry name" value="TRNASYNTHTYR"/>
</dbReference>
<dbReference type="SMART" id="SM00363">
    <property type="entry name" value="S4"/>
    <property type="match status" value="1"/>
</dbReference>
<dbReference type="SUPFAM" id="SSF55174">
    <property type="entry name" value="Alpha-L RNA-binding motif"/>
    <property type="match status" value="1"/>
</dbReference>
<dbReference type="SUPFAM" id="SSF52374">
    <property type="entry name" value="Nucleotidylyl transferase"/>
    <property type="match status" value="1"/>
</dbReference>
<dbReference type="PROSITE" id="PS00178">
    <property type="entry name" value="AA_TRNA_LIGASE_I"/>
    <property type="match status" value="1"/>
</dbReference>
<dbReference type="PROSITE" id="PS50889">
    <property type="entry name" value="S4"/>
    <property type="match status" value="1"/>
</dbReference>
<sequence length="424" mass="47527">MASSNLIKQLQERGLVAQVTDEEALAERLAQGPIALYCGFDPTADSLHLGHLVPLLCLKRFQQAGHKPVALVGGATGLIGDPSFKAAERKLNTEETVQEWVDKIRKQVAPFLDFDCGENSAIAANNYDWFGNMNVLTFLRDIGKHFSVNQMINKEAVKQRLNREDQGISFTEFSYNLLQGYDFACLNKQYGVVLQIGGSDQWGNITSGIDLTRRLHQNQVFGLTVPLITKADGTKFGKTEGGAVWLDPKKTSPYKFYQFWINTADADVYRFLKFFTFMSIEEINALEEEDKNSGKAPRAQYVLAEQVTRLVHGEEGLQAAKRITECLFSGSLSALSEADFEQLAQDGVPMVEMEKGADLMQALVDSELQPSRGQARKTIASNAITINGEKQSDPEYFFKEEDRLFGRFTLLRRGKKNYCLICWK</sequence>
<evidence type="ECO:0000255" key="1">
    <source>
        <dbReference type="HAMAP-Rule" id="MF_02006"/>
    </source>
</evidence>
<protein>
    <recommendedName>
        <fullName evidence="1">Tyrosine--tRNA ligase</fullName>
        <ecNumber evidence="1">6.1.1.1</ecNumber>
    </recommendedName>
    <alternativeName>
        <fullName evidence="1">Tyrosyl-tRNA synthetase</fullName>
        <shortName evidence="1">TyrRS</shortName>
    </alternativeName>
</protein>
<organism>
    <name type="scientific">Escherichia coli O157:H7 (strain EC4115 / EHEC)</name>
    <dbReference type="NCBI Taxonomy" id="444450"/>
    <lineage>
        <taxon>Bacteria</taxon>
        <taxon>Pseudomonadati</taxon>
        <taxon>Pseudomonadota</taxon>
        <taxon>Gammaproteobacteria</taxon>
        <taxon>Enterobacterales</taxon>
        <taxon>Enterobacteriaceae</taxon>
        <taxon>Escherichia</taxon>
    </lineage>
</organism>
<feature type="chain" id="PRO_1000189290" description="Tyrosine--tRNA ligase">
    <location>
        <begin position="1"/>
        <end position="424"/>
    </location>
</feature>
<feature type="domain" description="S4 RNA-binding" evidence="1">
    <location>
        <begin position="357"/>
        <end position="414"/>
    </location>
</feature>
<feature type="short sequence motif" description="'HIGH' region">
    <location>
        <begin position="42"/>
        <end position="51"/>
    </location>
</feature>
<feature type="short sequence motif" description="'KMSKS' region">
    <location>
        <begin position="235"/>
        <end position="239"/>
    </location>
</feature>
<feature type="binding site" evidence="1">
    <location>
        <position position="37"/>
    </location>
    <ligand>
        <name>L-tyrosine</name>
        <dbReference type="ChEBI" id="CHEBI:58315"/>
    </ligand>
</feature>
<feature type="binding site" evidence="1">
    <location>
        <position position="175"/>
    </location>
    <ligand>
        <name>L-tyrosine</name>
        <dbReference type="ChEBI" id="CHEBI:58315"/>
    </ligand>
</feature>
<feature type="binding site" evidence="1">
    <location>
        <position position="179"/>
    </location>
    <ligand>
        <name>L-tyrosine</name>
        <dbReference type="ChEBI" id="CHEBI:58315"/>
    </ligand>
</feature>
<feature type="binding site" evidence="1">
    <location>
        <position position="238"/>
    </location>
    <ligand>
        <name>ATP</name>
        <dbReference type="ChEBI" id="CHEBI:30616"/>
    </ligand>
</feature>
<feature type="modified residue" description="N6-acetyllysine" evidence="1">
    <location>
        <position position="144"/>
    </location>
</feature>
<name>SYY_ECO5E</name>
<comment type="function">
    <text evidence="1">Catalyzes the attachment of tyrosine to tRNA(Tyr) in a two-step reaction: tyrosine is first activated by ATP to form Tyr-AMP and then transferred to the acceptor end of tRNA(Tyr).</text>
</comment>
<comment type="catalytic activity">
    <reaction evidence="1">
        <text>tRNA(Tyr) + L-tyrosine + ATP = L-tyrosyl-tRNA(Tyr) + AMP + diphosphate + H(+)</text>
        <dbReference type="Rhea" id="RHEA:10220"/>
        <dbReference type="Rhea" id="RHEA-COMP:9706"/>
        <dbReference type="Rhea" id="RHEA-COMP:9707"/>
        <dbReference type="ChEBI" id="CHEBI:15378"/>
        <dbReference type="ChEBI" id="CHEBI:30616"/>
        <dbReference type="ChEBI" id="CHEBI:33019"/>
        <dbReference type="ChEBI" id="CHEBI:58315"/>
        <dbReference type="ChEBI" id="CHEBI:78442"/>
        <dbReference type="ChEBI" id="CHEBI:78536"/>
        <dbReference type="ChEBI" id="CHEBI:456215"/>
        <dbReference type="EC" id="6.1.1.1"/>
    </reaction>
</comment>
<comment type="subunit">
    <text evidence="1">Homodimer.</text>
</comment>
<comment type="subcellular location">
    <subcellularLocation>
        <location evidence="1">Cytoplasm</location>
    </subcellularLocation>
</comment>
<comment type="similarity">
    <text evidence="1">Belongs to the class-I aminoacyl-tRNA synthetase family. TyrS type 1 subfamily.</text>
</comment>
<reference key="1">
    <citation type="journal article" date="2011" name="Proc. Natl. Acad. Sci. U.S.A.">
        <title>Genomic anatomy of Escherichia coli O157:H7 outbreaks.</title>
        <authorList>
            <person name="Eppinger M."/>
            <person name="Mammel M.K."/>
            <person name="Leclerc J.E."/>
            <person name="Ravel J."/>
            <person name="Cebula T.A."/>
        </authorList>
    </citation>
    <scope>NUCLEOTIDE SEQUENCE [LARGE SCALE GENOMIC DNA]</scope>
    <source>
        <strain>EC4115 / EHEC</strain>
    </source>
</reference>